<dbReference type="EMBL" id="BA000012">
    <property type="protein sequence ID" value="BAB52058.1"/>
    <property type="molecule type" value="Genomic_DNA"/>
</dbReference>
<dbReference type="RefSeq" id="WP_010913396.1">
    <property type="nucleotide sequence ID" value="NC_002678.2"/>
</dbReference>
<dbReference type="SMR" id="Q98BB4"/>
<dbReference type="GeneID" id="66686523"/>
<dbReference type="KEGG" id="mlo:mll5649"/>
<dbReference type="eggNOG" id="COG2967">
    <property type="taxonomic scope" value="Bacteria"/>
</dbReference>
<dbReference type="HOGENOM" id="CLU_128074_1_0_5"/>
<dbReference type="Proteomes" id="UP000000552">
    <property type="component" value="Chromosome"/>
</dbReference>
<dbReference type="GO" id="GO:0070987">
    <property type="term" value="P:error-free translesion synthesis"/>
    <property type="evidence" value="ECO:0007669"/>
    <property type="project" value="TreeGrafter"/>
</dbReference>
<dbReference type="Gene3D" id="2.60.40.1470">
    <property type="entry name" value="ApaG domain"/>
    <property type="match status" value="1"/>
</dbReference>
<dbReference type="HAMAP" id="MF_00791">
    <property type="entry name" value="ApaG"/>
    <property type="match status" value="1"/>
</dbReference>
<dbReference type="InterPro" id="IPR007474">
    <property type="entry name" value="ApaG_domain"/>
</dbReference>
<dbReference type="InterPro" id="IPR036767">
    <property type="entry name" value="ApaG_sf"/>
</dbReference>
<dbReference type="InterPro" id="IPR023065">
    <property type="entry name" value="Uncharacterised_ApaG"/>
</dbReference>
<dbReference type="NCBIfam" id="NF003967">
    <property type="entry name" value="PRK05461.1"/>
    <property type="match status" value="1"/>
</dbReference>
<dbReference type="PANTHER" id="PTHR14289">
    <property type="entry name" value="F-BOX ONLY PROTEIN 3"/>
    <property type="match status" value="1"/>
</dbReference>
<dbReference type="PANTHER" id="PTHR14289:SF16">
    <property type="entry name" value="POLYMERASE DELTA-INTERACTING PROTEIN 2"/>
    <property type="match status" value="1"/>
</dbReference>
<dbReference type="Pfam" id="PF04379">
    <property type="entry name" value="DUF525"/>
    <property type="match status" value="1"/>
</dbReference>
<dbReference type="SUPFAM" id="SSF110069">
    <property type="entry name" value="ApaG-like"/>
    <property type="match status" value="1"/>
</dbReference>
<dbReference type="PROSITE" id="PS51087">
    <property type="entry name" value="APAG"/>
    <property type="match status" value="1"/>
</dbReference>
<gene>
    <name evidence="1" type="primary">apaG</name>
    <name type="ordered locus">mll5649</name>
</gene>
<organism>
    <name type="scientific">Mesorhizobium japonicum (strain LMG 29417 / CECT 9101 / MAFF 303099)</name>
    <name type="common">Mesorhizobium loti (strain MAFF 303099)</name>
    <dbReference type="NCBI Taxonomy" id="266835"/>
    <lineage>
        <taxon>Bacteria</taxon>
        <taxon>Pseudomonadati</taxon>
        <taxon>Pseudomonadota</taxon>
        <taxon>Alphaproteobacteria</taxon>
        <taxon>Hyphomicrobiales</taxon>
        <taxon>Phyllobacteriaceae</taxon>
        <taxon>Mesorhizobium</taxon>
    </lineage>
</organism>
<feature type="chain" id="PRO_0000197958" description="Protein ApaG">
    <location>
        <begin position="1"/>
        <end position="130"/>
    </location>
</feature>
<feature type="domain" description="ApaG" evidence="1">
    <location>
        <begin position="3"/>
        <end position="127"/>
    </location>
</feature>
<sequence>MYRAVTRNIEVQVRPFYLEDRSDPSENRYVWGYQITIDNQSDEFVQLLSRYWHITDGAGRVEEVRGPGVVGDQPELNPGDSYQYTSGCPLSTPSGIMVGHYTMRNKRGETFDIAIPAFSLDLPGTRRTVN</sequence>
<reference key="1">
    <citation type="journal article" date="2000" name="DNA Res.">
        <title>Complete genome structure of the nitrogen-fixing symbiotic bacterium Mesorhizobium loti.</title>
        <authorList>
            <person name="Kaneko T."/>
            <person name="Nakamura Y."/>
            <person name="Sato S."/>
            <person name="Asamizu E."/>
            <person name="Kato T."/>
            <person name="Sasamoto S."/>
            <person name="Watanabe A."/>
            <person name="Idesawa K."/>
            <person name="Ishikawa A."/>
            <person name="Kawashima K."/>
            <person name="Kimura T."/>
            <person name="Kishida Y."/>
            <person name="Kiyokawa C."/>
            <person name="Kohara M."/>
            <person name="Matsumoto M."/>
            <person name="Matsuno A."/>
            <person name="Mochizuki Y."/>
            <person name="Nakayama S."/>
            <person name="Nakazaki N."/>
            <person name="Shimpo S."/>
            <person name="Sugimoto M."/>
            <person name="Takeuchi C."/>
            <person name="Yamada M."/>
            <person name="Tabata S."/>
        </authorList>
    </citation>
    <scope>NUCLEOTIDE SEQUENCE [LARGE SCALE GENOMIC DNA]</scope>
    <source>
        <strain>LMG 29417 / CECT 9101 / MAFF 303099</strain>
    </source>
</reference>
<accession>Q98BB4</accession>
<evidence type="ECO:0000255" key="1">
    <source>
        <dbReference type="HAMAP-Rule" id="MF_00791"/>
    </source>
</evidence>
<protein>
    <recommendedName>
        <fullName evidence="1">Protein ApaG</fullName>
    </recommendedName>
</protein>
<proteinExistence type="inferred from homology"/>
<name>APAG_RHILO</name>